<comment type="catalytic activity">
    <reaction evidence="1">
        <text>sulfate + ATP + H(+) = adenosine 5'-phosphosulfate + diphosphate</text>
        <dbReference type="Rhea" id="RHEA:18133"/>
        <dbReference type="ChEBI" id="CHEBI:15378"/>
        <dbReference type="ChEBI" id="CHEBI:16189"/>
        <dbReference type="ChEBI" id="CHEBI:30616"/>
        <dbReference type="ChEBI" id="CHEBI:33019"/>
        <dbReference type="ChEBI" id="CHEBI:58243"/>
        <dbReference type="EC" id="2.7.7.4"/>
    </reaction>
</comment>
<comment type="pathway">
    <text evidence="1">Sulfur metabolism; hydrogen sulfide biosynthesis; sulfite from sulfate: step 1/3.</text>
</comment>
<comment type="similarity">
    <text evidence="1">Belongs to the sulfate adenylyltransferase family.</text>
</comment>
<keyword id="KW-0067">ATP-binding</keyword>
<keyword id="KW-0547">Nucleotide-binding</keyword>
<keyword id="KW-0548">Nucleotidyltransferase</keyword>
<keyword id="KW-0808">Transferase</keyword>
<feature type="chain" id="PRO_0000340625" description="Sulfate adenylyltransferase">
    <location>
        <begin position="1"/>
        <end position="389"/>
    </location>
</feature>
<protein>
    <recommendedName>
        <fullName evidence="1">Sulfate adenylyltransferase</fullName>
        <ecNumber evidence="1">2.7.7.4</ecNumber>
    </recommendedName>
    <alternativeName>
        <fullName evidence="1">ATP-sulfurylase</fullName>
    </alternativeName>
    <alternativeName>
        <fullName evidence="1">Sulfate adenylate transferase</fullName>
        <shortName evidence="1">SAT</shortName>
    </alternativeName>
</protein>
<proteinExistence type="inferred from homology"/>
<organism>
    <name type="scientific">Microcystis aeruginosa (strain NIES-843 / IAM M-2473)</name>
    <dbReference type="NCBI Taxonomy" id="449447"/>
    <lineage>
        <taxon>Bacteria</taxon>
        <taxon>Bacillati</taxon>
        <taxon>Cyanobacteriota</taxon>
        <taxon>Cyanophyceae</taxon>
        <taxon>Oscillatoriophycideae</taxon>
        <taxon>Chroococcales</taxon>
        <taxon>Microcystaceae</taxon>
        <taxon>Microcystis</taxon>
    </lineage>
</organism>
<accession>B0JW81</accession>
<reference key="1">
    <citation type="journal article" date="2007" name="DNA Res.">
        <title>Complete genomic structure of the bloom-forming toxic cyanobacterium Microcystis aeruginosa NIES-843.</title>
        <authorList>
            <person name="Kaneko T."/>
            <person name="Nakajima N."/>
            <person name="Okamoto S."/>
            <person name="Suzuki I."/>
            <person name="Tanabe Y."/>
            <person name="Tamaoki M."/>
            <person name="Nakamura Y."/>
            <person name="Kasai F."/>
            <person name="Watanabe A."/>
            <person name="Kawashima K."/>
            <person name="Kishida Y."/>
            <person name="Ono A."/>
            <person name="Shimizu Y."/>
            <person name="Takahashi C."/>
            <person name="Minami C."/>
            <person name="Fujishiro T."/>
            <person name="Kohara M."/>
            <person name="Katoh M."/>
            <person name="Nakazaki N."/>
            <person name="Nakayama S."/>
            <person name="Yamada M."/>
            <person name="Tabata S."/>
            <person name="Watanabe M.M."/>
        </authorList>
    </citation>
    <scope>NUCLEOTIDE SEQUENCE [LARGE SCALE GENOMIC DNA]</scope>
    <source>
        <strain>NIES-843 / IAM M-247</strain>
    </source>
</reference>
<gene>
    <name evidence="1" type="primary">sat</name>
    <name type="ordered locus">MAE_17390</name>
</gene>
<sequence length="389" mass="44084">MTVLTEGIAPHGGQLINRIATAAEKAEFLALAEKLPRVSLDERALSDLVMIAIGGFSPLKGFMEQDDYEKVVDDMRLINGLPWAIPVTLSVREEVADPLKEGNWIRLDDSEGNFVGVLELTQKYRYNKAHEAVNVYRTDDQKHPGVKVLYEQGEINLAGPIWLLQRDPHPQFPKYQIDPLQSRKMFHEKAWKTIVGFQTRNPIHRAHEYIQKCALEVVDGLFLHPLVGATKSDDVPADVRMRCYEIMMDKYFPQDRVILAINPSAMRYAGPREAIFHAIIRKNYGCTHFIVGRDHAGVGDYYGTYDAQYIFDEFEPGELGIVPMKFEHAFYCTRTSGMATTKTSPSLPEERIHLSGTKVRELLRKGELPPPEFSRPEVAAELIRAMQGS</sequence>
<name>SAT_MICAN</name>
<evidence type="ECO:0000255" key="1">
    <source>
        <dbReference type="HAMAP-Rule" id="MF_00066"/>
    </source>
</evidence>
<dbReference type="EC" id="2.7.7.4" evidence="1"/>
<dbReference type="EMBL" id="AP009552">
    <property type="protein sequence ID" value="BAG01561.1"/>
    <property type="molecule type" value="Genomic_DNA"/>
</dbReference>
<dbReference type="RefSeq" id="WP_002803711.1">
    <property type="nucleotide sequence ID" value="NC_010296.1"/>
</dbReference>
<dbReference type="SMR" id="B0JW81"/>
<dbReference type="STRING" id="449447.MAE_17390"/>
<dbReference type="PaxDb" id="449447-MAE_17390"/>
<dbReference type="EnsemblBacteria" id="BAG01561">
    <property type="protein sequence ID" value="BAG01561"/>
    <property type="gene ID" value="MAE_17390"/>
</dbReference>
<dbReference type="GeneID" id="66708559"/>
<dbReference type="KEGG" id="mar:MAE_17390"/>
<dbReference type="eggNOG" id="COG2046">
    <property type="taxonomic scope" value="Bacteria"/>
</dbReference>
<dbReference type="HOGENOM" id="CLU_022950_1_1_3"/>
<dbReference type="BioCyc" id="MAER449447:MAE_RS07615-MONOMER"/>
<dbReference type="UniPathway" id="UPA00140">
    <property type="reaction ID" value="UER00204"/>
</dbReference>
<dbReference type="Proteomes" id="UP000001510">
    <property type="component" value="Chromosome"/>
</dbReference>
<dbReference type="GO" id="GO:0005524">
    <property type="term" value="F:ATP binding"/>
    <property type="evidence" value="ECO:0007669"/>
    <property type="project" value="UniProtKB-KW"/>
</dbReference>
<dbReference type="GO" id="GO:0004781">
    <property type="term" value="F:sulfate adenylyltransferase (ATP) activity"/>
    <property type="evidence" value="ECO:0007669"/>
    <property type="project" value="UniProtKB-UniRule"/>
</dbReference>
<dbReference type="GO" id="GO:0070814">
    <property type="term" value="P:hydrogen sulfide biosynthetic process"/>
    <property type="evidence" value="ECO:0007669"/>
    <property type="project" value="UniProtKB-UniRule"/>
</dbReference>
<dbReference type="GO" id="GO:0000103">
    <property type="term" value="P:sulfate assimilation"/>
    <property type="evidence" value="ECO:0007669"/>
    <property type="project" value="UniProtKB-UniRule"/>
</dbReference>
<dbReference type="CDD" id="cd00517">
    <property type="entry name" value="ATPS"/>
    <property type="match status" value="1"/>
</dbReference>
<dbReference type="Gene3D" id="3.40.50.620">
    <property type="entry name" value="HUPs"/>
    <property type="match status" value="1"/>
</dbReference>
<dbReference type="Gene3D" id="3.10.400.10">
    <property type="entry name" value="Sulfate adenylyltransferase"/>
    <property type="match status" value="1"/>
</dbReference>
<dbReference type="HAMAP" id="MF_00066">
    <property type="entry name" value="Sulf_adenylyltr"/>
    <property type="match status" value="1"/>
</dbReference>
<dbReference type="InterPro" id="IPR025980">
    <property type="entry name" value="ATP-Sase_PUA-like_dom"/>
</dbReference>
<dbReference type="InterPro" id="IPR015947">
    <property type="entry name" value="PUA-like_sf"/>
</dbReference>
<dbReference type="InterPro" id="IPR014729">
    <property type="entry name" value="Rossmann-like_a/b/a_fold"/>
</dbReference>
<dbReference type="InterPro" id="IPR020792">
    <property type="entry name" value="SO4_adenylyltransferase_pro"/>
</dbReference>
<dbReference type="InterPro" id="IPR024951">
    <property type="entry name" value="Sulfurylase_cat_dom"/>
</dbReference>
<dbReference type="InterPro" id="IPR002650">
    <property type="entry name" value="Sulphate_adenylyltransferase"/>
</dbReference>
<dbReference type="NCBIfam" id="NF003166">
    <property type="entry name" value="PRK04149.1"/>
    <property type="match status" value="1"/>
</dbReference>
<dbReference type="NCBIfam" id="TIGR00339">
    <property type="entry name" value="sopT"/>
    <property type="match status" value="1"/>
</dbReference>
<dbReference type="PANTHER" id="PTHR43509">
    <property type="match status" value="1"/>
</dbReference>
<dbReference type="PANTHER" id="PTHR43509:SF1">
    <property type="entry name" value="SULFATE ADENYLYLTRANSFERASE"/>
    <property type="match status" value="1"/>
</dbReference>
<dbReference type="Pfam" id="PF01747">
    <property type="entry name" value="ATP-sulfurylase"/>
    <property type="match status" value="1"/>
</dbReference>
<dbReference type="Pfam" id="PF14306">
    <property type="entry name" value="PUA_2"/>
    <property type="match status" value="1"/>
</dbReference>
<dbReference type="SUPFAM" id="SSF52374">
    <property type="entry name" value="Nucleotidylyl transferase"/>
    <property type="match status" value="1"/>
</dbReference>
<dbReference type="SUPFAM" id="SSF88697">
    <property type="entry name" value="PUA domain-like"/>
    <property type="match status" value="1"/>
</dbReference>